<protein>
    <recommendedName>
        <fullName>Homeobox protein HB1</fullName>
    </recommendedName>
    <alternativeName>
        <fullName>SPHBOX1</fullName>
    </alternativeName>
</protein>
<accession>P13545</accession>
<proteinExistence type="evidence at transcript level"/>
<name>HMB1_STRPU</name>
<dbReference type="EMBL" id="D85419">
    <property type="protein sequence ID" value="BAA12813.1"/>
    <property type="molecule type" value="mRNA"/>
</dbReference>
<dbReference type="EMBL" id="X14509">
    <property type="protein sequence ID" value="CAA32661.1"/>
    <property type="molecule type" value="Genomic_DNA"/>
</dbReference>
<dbReference type="PIR" id="S04922">
    <property type="entry name" value="S04922"/>
</dbReference>
<dbReference type="RefSeq" id="NP_999725.1">
    <property type="nucleotide sequence ID" value="NM_214560.1"/>
</dbReference>
<dbReference type="SMR" id="P13545"/>
<dbReference type="STRING" id="7668.P13545"/>
<dbReference type="EnsemblMetazoa" id="NM_214560">
    <property type="protein sequence ID" value="NP_999725"/>
    <property type="gene ID" value="GeneID_373356"/>
</dbReference>
<dbReference type="GeneID" id="373356"/>
<dbReference type="KEGG" id="spu:373356"/>
<dbReference type="CTD" id="373356"/>
<dbReference type="HOGENOM" id="CLU_1379729_0_0_1"/>
<dbReference type="InParanoid" id="P13545"/>
<dbReference type="OMA" id="ITSWDAR"/>
<dbReference type="OrthoDB" id="6159439at2759"/>
<dbReference type="PhylomeDB" id="P13545"/>
<dbReference type="Proteomes" id="UP000007110">
    <property type="component" value="Unassembled WGS sequence"/>
</dbReference>
<dbReference type="GO" id="GO:0005634">
    <property type="term" value="C:nucleus"/>
    <property type="evidence" value="ECO:0000318"/>
    <property type="project" value="GO_Central"/>
</dbReference>
<dbReference type="GO" id="GO:0000981">
    <property type="term" value="F:DNA-binding transcription factor activity, RNA polymerase II-specific"/>
    <property type="evidence" value="ECO:0000318"/>
    <property type="project" value="GO_Central"/>
</dbReference>
<dbReference type="GO" id="GO:0000978">
    <property type="term" value="F:RNA polymerase II cis-regulatory region sequence-specific DNA binding"/>
    <property type="evidence" value="ECO:0000318"/>
    <property type="project" value="GO_Central"/>
</dbReference>
<dbReference type="GO" id="GO:0009952">
    <property type="term" value="P:anterior/posterior pattern specification"/>
    <property type="evidence" value="ECO:0000318"/>
    <property type="project" value="GO_Central"/>
</dbReference>
<dbReference type="GO" id="GO:0006357">
    <property type="term" value="P:regulation of transcription by RNA polymerase II"/>
    <property type="evidence" value="ECO:0000318"/>
    <property type="project" value="GO_Central"/>
</dbReference>
<dbReference type="CDD" id="cd00086">
    <property type="entry name" value="homeodomain"/>
    <property type="match status" value="1"/>
</dbReference>
<dbReference type="FunFam" id="1.10.10.60:FF:000193">
    <property type="entry name" value="Ultrabithorax, isoform C"/>
    <property type="match status" value="1"/>
</dbReference>
<dbReference type="Gene3D" id="1.10.10.60">
    <property type="entry name" value="Homeodomain-like"/>
    <property type="match status" value="1"/>
</dbReference>
<dbReference type="InterPro" id="IPR050296">
    <property type="entry name" value="Antp_homeobox"/>
</dbReference>
<dbReference type="InterPro" id="IPR001356">
    <property type="entry name" value="HD"/>
</dbReference>
<dbReference type="InterPro" id="IPR020479">
    <property type="entry name" value="HD_metazoa"/>
</dbReference>
<dbReference type="InterPro" id="IPR017970">
    <property type="entry name" value="Homeobox_CS"/>
</dbReference>
<dbReference type="InterPro" id="IPR009057">
    <property type="entry name" value="Homeodomain-like_sf"/>
</dbReference>
<dbReference type="InterPro" id="IPR000047">
    <property type="entry name" value="HTH_motif"/>
</dbReference>
<dbReference type="PANTHER" id="PTHR45659:SF4">
    <property type="entry name" value="HOMEOBOX PROTEIN ABDOMINAL-A"/>
    <property type="match status" value="1"/>
</dbReference>
<dbReference type="PANTHER" id="PTHR45659">
    <property type="entry name" value="HOMEOBOX PROTEIN HOX"/>
    <property type="match status" value="1"/>
</dbReference>
<dbReference type="Pfam" id="PF00046">
    <property type="entry name" value="Homeodomain"/>
    <property type="match status" value="1"/>
</dbReference>
<dbReference type="PRINTS" id="PR00024">
    <property type="entry name" value="HOMEOBOX"/>
</dbReference>
<dbReference type="PRINTS" id="PR00031">
    <property type="entry name" value="HTHREPRESSR"/>
</dbReference>
<dbReference type="SMART" id="SM00389">
    <property type="entry name" value="HOX"/>
    <property type="match status" value="1"/>
</dbReference>
<dbReference type="SUPFAM" id="SSF46689">
    <property type="entry name" value="Homeodomain-like"/>
    <property type="match status" value="1"/>
</dbReference>
<dbReference type="PROSITE" id="PS00027">
    <property type="entry name" value="HOMEOBOX_1"/>
    <property type="match status" value="1"/>
</dbReference>
<dbReference type="PROSITE" id="PS50071">
    <property type="entry name" value="HOMEOBOX_2"/>
    <property type="match status" value="1"/>
</dbReference>
<comment type="subcellular location">
    <subcellularLocation>
        <location evidence="4">Nucleus</location>
    </subcellularLocation>
</comment>
<comment type="similarity">
    <text evidence="4">Belongs to the Antp homeobox family.</text>
</comment>
<sequence length="308" mass="33295">MSSSSYFVNPAFFPTYPHAGEQFYATPSGSYELSSCAFSKNPKTSSYSSSSSPSLVATSKPPCTQQLGAATFYGGGTLSNFSTTAGYGDHSTTSAGYGSMSQPISPTSAWDSRMAATYNSASWGSTAAELGDGSYRGRVSALTAGTGCLVSAAAEPNNNHCSQVMSPCKSTSGYPWMPVSGPNVGLEVGRKRCRQTYTRYQTLELEKEFHFNRYLTRRRRIELSHLLGLTERQIKIWFQNRRMKYKKESKNKEEGGSGEGEGENESESTGTENAQPQSAVHGVTILEKPSSLVLHVDDTVGLNAVRHT</sequence>
<keyword id="KW-0217">Developmental protein</keyword>
<keyword id="KW-0238">DNA-binding</keyword>
<keyword id="KW-0371">Homeobox</keyword>
<keyword id="KW-0539">Nucleus</keyword>
<keyword id="KW-1185">Reference proteome</keyword>
<evidence type="ECO:0000250" key="1"/>
<evidence type="ECO:0000255" key="2">
    <source>
        <dbReference type="PROSITE-ProRule" id="PRU00108"/>
    </source>
</evidence>
<evidence type="ECO:0000256" key="3">
    <source>
        <dbReference type="SAM" id="MobiDB-lite"/>
    </source>
</evidence>
<evidence type="ECO:0000305" key="4"/>
<organism>
    <name type="scientific">Strongylocentrotus purpuratus</name>
    <name type="common">Purple sea urchin</name>
    <dbReference type="NCBI Taxonomy" id="7668"/>
    <lineage>
        <taxon>Eukaryota</taxon>
        <taxon>Metazoa</taxon>
        <taxon>Echinodermata</taxon>
        <taxon>Eleutherozoa</taxon>
        <taxon>Echinozoa</taxon>
        <taxon>Echinoidea</taxon>
        <taxon>Euechinoidea</taxon>
        <taxon>Echinacea</taxon>
        <taxon>Camarodonta</taxon>
        <taxon>Echinidea</taxon>
        <taxon>Strongylocentrotidae</taxon>
        <taxon>Strongylocentrotus</taxon>
    </lineage>
</organism>
<feature type="chain" id="PRO_0000049010" description="Homeobox protein HB1">
    <location>
        <begin position="1"/>
        <end position="308"/>
    </location>
</feature>
<feature type="DNA-binding region" description="Homeobox" evidence="2">
    <location>
        <begin position="190"/>
        <end position="249"/>
    </location>
</feature>
<feature type="region of interest" description="Disordered" evidence="3">
    <location>
        <begin position="247"/>
        <end position="280"/>
    </location>
</feature>
<feature type="short sequence motif" description="Antp-type hexapeptide" evidence="1">
    <location>
        <begin position="173"/>
        <end position="178"/>
    </location>
</feature>
<reference key="1">
    <citation type="submission" date="1996-05" db="EMBL/GenBank/DDBJ databases">
        <authorList>
            <person name="Martinez P."/>
            <person name="Lee J."/>
            <person name="Davidson E.H."/>
        </authorList>
    </citation>
    <scope>NUCLEOTIDE SEQUENCE</scope>
</reference>
<reference key="2">
    <citation type="journal article" date="1989" name="Genes Dev.">
        <title>Progressively restricted expression of a homeo box gene within the aboral ectoderm of developing sea urchin embryos.</title>
        <authorList>
            <person name="Angerer L.M."/>
            <person name="Dolecki G.J."/>
            <person name="Gagnon M.L."/>
            <person name="Lum R."/>
            <person name="Yang W.Q."/>
            <person name="Humphreys T."/>
            <person name="Angerer R."/>
        </authorList>
    </citation>
    <scope>NUCLEOTIDE SEQUENCE [GENOMIC DNA] OF 7-79</scope>
</reference>